<reference key="1">
    <citation type="submission" date="2005-06" db="EMBL/GenBank/DDBJ databases">
        <title>TLR-6 in Dasypus novemcinctus.</title>
        <authorList>
            <person name="Adams J.E."/>
            <person name="Pena M.T."/>
            <person name="Gillis T.P."/>
            <person name="Williams D.L."/>
            <person name="Adams L.B."/>
            <person name="Truman R.W."/>
        </authorList>
    </citation>
    <scope>NUCLEOTIDE SEQUENCE [MRNA]</scope>
</reference>
<keyword id="KW-1003">Cell membrane</keyword>
<keyword id="KW-0968">Cytoplasmic vesicle</keyword>
<keyword id="KW-1015">Disulfide bond</keyword>
<keyword id="KW-0325">Glycoprotein</keyword>
<keyword id="KW-0333">Golgi apparatus</keyword>
<keyword id="KW-0391">Immunity</keyword>
<keyword id="KW-0395">Inflammatory response</keyword>
<keyword id="KW-0399">Innate immunity</keyword>
<keyword id="KW-0433">Leucine-rich repeat</keyword>
<keyword id="KW-0472">Membrane</keyword>
<keyword id="KW-0520">NAD</keyword>
<keyword id="KW-0675">Receptor</keyword>
<keyword id="KW-0677">Repeat</keyword>
<keyword id="KW-0732">Signal</keyword>
<keyword id="KW-0812">Transmembrane</keyword>
<keyword id="KW-1133">Transmembrane helix</keyword>
<accession>Q0ZUL9</accession>
<protein>
    <recommendedName>
        <fullName>Toll-like receptor 6</fullName>
    </recommendedName>
    <cdAntigenName>CD286</cdAntigenName>
</protein>
<gene>
    <name type="primary">TLR6</name>
</gene>
<sequence>MTKDKEPIVKNFHLVCIVTLIVGTIIQFSDADEFAIDMSKTGLTHVPKDLPPKTKVLDMSQNYLSELQISDISFLSGLKILVLSHNRLQLLDLSVFKFNQDLEYLDLSHNQLKKMSCHPFVNLKHLDLSFNDFDSLPICKEFGNLTQLDFLGLSATKLQQLDLLPIAHLHLNCILLDLKGYYVKQNETESLQILNTKKLHLVFHTGSFFSVQVNMSVNTLGCLEMTNIKLNDKNCYFLMKFLLELTKGPSLLNFTLNHMETTWKCLVRVFQFLWTKPVEYLNIYNLTIVDDINKEYFIYCKTALKALKIEHITKTVFIFSWSSLYTLFSEMNIMMLSITDTPFIHMLCPKTRSTFKFLDFTQNVFTDSIFENCSTLVELETLILQKNGLKDLFKIGLMTKGMPSLEILDLSWNSLVFNRQRKCIWVGSILMLNMSSNLLTDLVFRCLPPRVTVLDLHNNRIMSIPKDVTSLETLQELNIAFNSLTDLPGCGTFSSLSVLIIDYNLISHPSTDFIQSCQNITSIKAGKNPFQCTCDLREFIKTISQMSSEVVKDWPDSYKCDYPESYKGTLLQDFHISQLSCSTSLLTVTIGATMLVLVVTVTFLCIYLDLPWYIRMVYQWTQTRRRARNIPLEELQRTLQFHAFISYSGHDSAWVKTELLPNLEKEDIQICLHERNFVPGKSIIENIINFIEKSYKSIFVLSPNFVQSEWCHYELYFAHHNLFHEAFDNLILILLEPIPQYSIPNNYHKLKSLIAQRTYLEWPKEKSKHGLFWANLRAAINIKLMEEKK</sequence>
<organism>
    <name type="scientific">Dasypus novemcinctus</name>
    <name type="common">Nine-banded armadillo</name>
    <dbReference type="NCBI Taxonomy" id="9361"/>
    <lineage>
        <taxon>Eukaryota</taxon>
        <taxon>Metazoa</taxon>
        <taxon>Chordata</taxon>
        <taxon>Craniata</taxon>
        <taxon>Vertebrata</taxon>
        <taxon>Euteleostomi</taxon>
        <taxon>Mammalia</taxon>
        <taxon>Eutheria</taxon>
        <taxon>Xenarthra</taxon>
        <taxon>Cingulata</taxon>
        <taxon>Dasypodidae</taxon>
        <taxon>Dasypus</taxon>
    </lineage>
</organism>
<comment type="function">
    <text evidence="4">Participates in the innate immune response to Gram-positive bacteria and fungi. Specifically recognizes diacylated and, to a lesser extent, triacylated lipopeptides. In response to diacylated lipopeptides, forms the activation cluster TLR2:TLR6:CD14:CD36, this cluster triggers signaling from the cell surface and subsequently is targeted to the Golgi in a lipid-raft dependent pathway. Acts via MYD88 and TRAF6, leading to NF-kappa-B activation, cytokine secretion and the inflammatory response. Recognizes mycoplasmal macrophage-activating lipopeptide-2kD (MALP-2), soluble tuberculosis factor (STF), phenol-soluble modulin (PSM) and B.burgdorferi outer surface protein A lipoprotein (OspA-L) cooperatively with TLR2. In complex with TLR4, promotes sterile inflammation in monocytes/macrophages in response to oxidized low-density lipoprotein (oxLDL) or amyloid-beta 42. In this context, the initial signal is provided by oxLDL- or amyloid-beta 42-binding to CD36. This event induces the formation of a heterodimer of TLR4 and TLR6, which is rapidly internalized and triggers inflammatory response, leading to the NF-kappa-B-dependent production of CXCL1, CXCL2 and CCL9 cytokines, via MYD88 signaling pathway, and CCL5 cytokine, via TICAM1 signaling pathway, as well as IL1B secretion.</text>
</comment>
<comment type="subunit">
    <text evidence="3 4">Homodimer (via cytoplasmic TIR domain) (By similarity). Heterodimer with TLR2 via their respective extracellular domains. Binds MYD88 via their respective TIR domains (By similarity). Interacts with CD36, following CD36 stimulation by oxLDL or amyloid-beta 42, and forms a heterodimer with TLR4. The trimeric complex is internalized and triggers inflammatory response. LYN kinase activity facilitates TLR4:TLR6 heterodimerization and signal initiation (By similarity). The heterodimer TLR2:TLR6 interacts with CD14 and CD36 in response to triacylated lipopeptides.</text>
</comment>
<comment type="subcellular location">
    <subcellularLocation>
        <location evidence="4">Cell membrane</location>
        <topology evidence="5">Single-pass type I membrane protein</topology>
    </subcellularLocation>
    <subcellularLocation>
        <location evidence="3">Cytoplasmic vesicle</location>
        <location evidence="3">Phagosome membrane</location>
        <topology evidence="5">Single-pass type I membrane protein</topology>
    </subcellularLocation>
    <subcellularLocation>
        <location evidence="4">Membrane raft</location>
    </subcellularLocation>
    <subcellularLocation>
        <location evidence="4">Golgi apparatus</location>
    </subcellularLocation>
    <text evidence="4">Upon complex formation with CD36 and TLR4, internalized through dynamin-dependent endocytosis. Does not reside in lipid rafts before stimulation but accumulates increasingly in the raft upon the presence of the microbial ligand. In response to diacylated lipoproteins, TLR2:TLR6 heterodimers are recruited in lipid rafts, this recruitment determine the intracellular targeting to the Golgi apparatus.</text>
</comment>
<comment type="similarity">
    <text evidence="7">Belongs to the Toll-like receptor family.</text>
</comment>
<comment type="caution">
    <text evidence="2 7">In some plant proteins and in human SARM1, the TIR domain has NAD(+) hydrolase (NADase) activity (By similarity). However, despite the presence of the catalytic Asp residue, the isolated TIR domain of human TLR4 lacks NADase activity (By similarity). Based on this, it is unlikely that Toll-like receptors have NADase activity.</text>
</comment>
<proteinExistence type="evidence at transcript level"/>
<dbReference type="EMBL" id="DQ113655">
    <property type="protein sequence ID" value="AAZ52552.1"/>
    <property type="molecule type" value="mRNA"/>
</dbReference>
<dbReference type="RefSeq" id="NP_001268236.1">
    <property type="nucleotide sequence ID" value="NM_001281307.1"/>
</dbReference>
<dbReference type="SMR" id="Q0ZUL9"/>
<dbReference type="GlyCosmos" id="Q0ZUL9">
    <property type="glycosylation" value="8 sites, No reported glycans"/>
</dbReference>
<dbReference type="GeneID" id="100913181"/>
<dbReference type="KEGG" id="dnm:100913181"/>
<dbReference type="CTD" id="10333"/>
<dbReference type="HOGENOM" id="CLU_006000_3_0_1"/>
<dbReference type="OrthoDB" id="1081807at2759"/>
<dbReference type="TreeFam" id="TF351113"/>
<dbReference type="GO" id="GO:0005794">
    <property type="term" value="C:Golgi apparatus"/>
    <property type="evidence" value="ECO:0000250"/>
    <property type="project" value="UniProtKB"/>
</dbReference>
<dbReference type="GO" id="GO:0045121">
    <property type="term" value="C:membrane raft"/>
    <property type="evidence" value="ECO:0000250"/>
    <property type="project" value="UniProtKB"/>
</dbReference>
<dbReference type="GO" id="GO:0030670">
    <property type="term" value="C:phagocytic vesicle membrane"/>
    <property type="evidence" value="ECO:0007669"/>
    <property type="project" value="UniProtKB-SubCell"/>
</dbReference>
<dbReference type="GO" id="GO:0035355">
    <property type="term" value="C:Toll-like receptor 2-Toll-like receptor 6 protein complex"/>
    <property type="evidence" value="ECO:0007669"/>
    <property type="project" value="TreeGrafter"/>
</dbReference>
<dbReference type="GO" id="GO:0042802">
    <property type="term" value="F:identical protein binding"/>
    <property type="evidence" value="ECO:0000250"/>
    <property type="project" value="UniProtKB"/>
</dbReference>
<dbReference type="GO" id="GO:0071723">
    <property type="term" value="F:lipopeptide binding"/>
    <property type="evidence" value="ECO:0007669"/>
    <property type="project" value="TreeGrafter"/>
</dbReference>
<dbReference type="GO" id="GO:0061809">
    <property type="term" value="F:NAD+ nucleosidase activity, cyclic ADP-ribose generating"/>
    <property type="evidence" value="ECO:0007669"/>
    <property type="project" value="UniProtKB-EC"/>
</dbReference>
<dbReference type="GO" id="GO:0035663">
    <property type="term" value="F:Toll-like receptor 2 binding"/>
    <property type="evidence" value="ECO:0007669"/>
    <property type="project" value="TreeGrafter"/>
</dbReference>
<dbReference type="GO" id="GO:0004888">
    <property type="term" value="F:transmembrane signaling receptor activity"/>
    <property type="evidence" value="ECO:0007669"/>
    <property type="project" value="InterPro"/>
</dbReference>
<dbReference type="GO" id="GO:0071726">
    <property type="term" value="P:cellular response to diacyl bacterial lipopeptide"/>
    <property type="evidence" value="ECO:0000250"/>
    <property type="project" value="UniProtKB"/>
</dbReference>
<dbReference type="GO" id="GO:0006954">
    <property type="term" value="P:inflammatory response"/>
    <property type="evidence" value="ECO:0007669"/>
    <property type="project" value="UniProtKB-KW"/>
</dbReference>
<dbReference type="GO" id="GO:0045087">
    <property type="term" value="P:innate immune response"/>
    <property type="evidence" value="ECO:0007669"/>
    <property type="project" value="UniProtKB-KW"/>
</dbReference>
<dbReference type="GO" id="GO:0032731">
    <property type="term" value="P:positive regulation of interleukin-1 beta production"/>
    <property type="evidence" value="ECO:0000250"/>
    <property type="project" value="UniProtKB"/>
</dbReference>
<dbReference type="GO" id="GO:1900227">
    <property type="term" value="P:positive regulation of NLRP3 inflammasome complex assembly"/>
    <property type="evidence" value="ECO:0000250"/>
    <property type="project" value="UniProtKB"/>
</dbReference>
<dbReference type="GO" id="GO:0002224">
    <property type="term" value="P:toll-like receptor signaling pathway"/>
    <property type="evidence" value="ECO:0007669"/>
    <property type="project" value="InterPro"/>
</dbReference>
<dbReference type="FunFam" id="3.40.50.10140:FF:000001">
    <property type="entry name" value="Toll-like receptor 2"/>
    <property type="match status" value="1"/>
</dbReference>
<dbReference type="FunFam" id="3.80.10.10:FF:000046">
    <property type="entry name" value="Toll-like receptor 2"/>
    <property type="match status" value="1"/>
</dbReference>
<dbReference type="Gene3D" id="3.80.10.10">
    <property type="entry name" value="Ribonuclease Inhibitor"/>
    <property type="match status" value="1"/>
</dbReference>
<dbReference type="Gene3D" id="3.40.50.10140">
    <property type="entry name" value="Toll/interleukin-1 receptor homology (TIR) domain"/>
    <property type="match status" value="1"/>
</dbReference>
<dbReference type="InterPro" id="IPR000483">
    <property type="entry name" value="Cys-rich_flank_reg_C"/>
</dbReference>
<dbReference type="InterPro" id="IPR001611">
    <property type="entry name" value="Leu-rich_rpt"/>
</dbReference>
<dbReference type="InterPro" id="IPR003591">
    <property type="entry name" value="Leu-rich_rpt_typical-subtyp"/>
</dbReference>
<dbReference type="InterPro" id="IPR032675">
    <property type="entry name" value="LRR_dom_sf"/>
</dbReference>
<dbReference type="InterPro" id="IPR000157">
    <property type="entry name" value="TIR_dom"/>
</dbReference>
<dbReference type="InterPro" id="IPR017241">
    <property type="entry name" value="Toll-like_receptor"/>
</dbReference>
<dbReference type="InterPro" id="IPR035897">
    <property type="entry name" value="Toll_tir_struct_dom_sf"/>
</dbReference>
<dbReference type="PANTHER" id="PTHR24365">
    <property type="entry name" value="TOLL-LIKE RECEPTOR"/>
    <property type="match status" value="1"/>
</dbReference>
<dbReference type="PANTHER" id="PTHR24365:SF422">
    <property type="entry name" value="TOLL-LIKE RECEPTOR 6"/>
    <property type="match status" value="1"/>
</dbReference>
<dbReference type="Pfam" id="PF13855">
    <property type="entry name" value="LRR_8"/>
    <property type="match status" value="1"/>
</dbReference>
<dbReference type="Pfam" id="PF01582">
    <property type="entry name" value="TIR"/>
    <property type="match status" value="1"/>
</dbReference>
<dbReference type="PIRSF" id="PIRSF037595">
    <property type="entry name" value="Toll-like_receptor"/>
    <property type="match status" value="1"/>
</dbReference>
<dbReference type="PRINTS" id="PR01537">
    <property type="entry name" value="INTRLKN1R1F"/>
</dbReference>
<dbReference type="PRINTS" id="PR00019">
    <property type="entry name" value="LEURICHRPT"/>
</dbReference>
<dbReference type="SMART" id="SM00369">
    <property type="entry name" value="LRR_TYP"/>
    <property type="match status" value="5"/>
</dbReference>
<dbReference type="SMART" id="SM00082">
    <property type="entry name" value="LRRCT"/>
    <property type="match status" value="1"/>
</dbReference>
<dbReference type="SMART" id="SM00255">
    <property type="entry name" value="TIR"/>
    <property type="match status" value="1"/>
</dbReference>
<dbReference type="SUPFAM" id="SSF52058">
    <property type="entry name" value="L domain-like"/>
    <property type="match status" value="2"/>
</dbReference>
<dbReference type="SUPFAM" id="SSF52200">
    <property type="entry name" value="Toll/Interleukin receptor TIR domain"/>
    <property type="match status" value="1"/>
</dbReference>
<dbReference type="PROSITE" id="PS51450">
    <property type="entry name" value="LRR"/>
    <property type="match status" value="10"/>
</dbReference>
<dbReference type="PROSITE" id="PS50104">
    <property type="entry name" value="TIR"/>
    <property type="match status" value="1"/>
</dbReference>
<evidence type="ECO:0000250" key="1"/>
<evidence type="ECO:0000250" key="2">
    <source>
        <dbReference type="UniProtKB" id="O00206"/>
    </source>
</evidence>
<evidence type="ECO:0000250" key="3">
    <source>
        <dbReference type="UniProtKB" id="Q9EPW9"/>
    </source>
</evidence>
<evidence type="ECO:0000250" key="4">
    <source>
        <dbReference type="UniProtKB" id="Q9Y2C9"/>
    </source>
</evidence>
<evidence type="ECO:0000255" key="5"/>
<evidence type="ECO:0000255" key="6">
    <source>
        <dbReference type="PROSITE-ProRule" id="PRU00204"/>
    </source>
</evidence>
<evidence type="ECO:0000305" key="7"/>
<feature type="signal peptide" evidence="5">
    <location>
        <begin position="1"/>
        <end position="31"/>
    </location>
</feature>
<feature type="chain" id="PRO_0000253756" description="Toll-like receptor 6">
    <location>
        <begin position="32"/>
        <end position="789"/>
    </location>
</feature>
<feature type="topological domain" description="Extracellular" evidence="5">
    <location>
        <begin position="32"/>
        <end position="587"/>
    </location>
</feature>
<feature type="transmembrane region" description="Helical" evidence="5">
    <location>
        <begin position="588"/>
        <end position="608"/>
    </location>
</feature>
<feature type="topological domain" description="Cytoplasmic" evidence="5">
    <location>
        <begin position="609"/>
        <end position="789"/>
    </location>
</feature>
<feature type="repeat" description="LRR 1">
    <location>
        <begin position="54"/>
        <end position="77"/>
    </location>
</feature>
<feature type="repeat" description="LRR 2">
    <location>
        <begin position="78"/>
        <end position="101"/>
    </location>
</feature>
<feature type="repeat" description="LRR 3">
    <location>
        <begin position="102"/>
        <end position="122"/>
    </location>
</feature>
<feature type="repeat" description="LRR 4">
    <location>
        <begin position="123"/>
        <end position="147"/>
    </location>
</feature>
<feature type="repeat" description="LRR 5">
    <location>
        <begin position="148"/>
        <end position="168"/>
    </location>
</feature>
<feature type="repeat" description="LRR 6">
    <location>
        <begin position="169"/>
        <end position="196"/>
    </location>
</feature>
<feature type="repeat" description="LRR 7">
    <location>
        <begin position="197"/>
        <end position="219"/>
    </location>
</feature>
<feature type="repeat" description="LRR 8">
    <location>
        <begin position="220"/>
        <end position="250"/>
    </location>
</feature>
<feature type="repeat" description="LRR 9">
    <location>
        <begin position="251"/>
        <end position="277"/>
    </location>
</feature>
<feature type="repeat" description="LRR 10">
    <location>
        <begin position="278"/>
        <end position="303"/>
    </location>
</feature>
<feature type="repeat" description="LRR 11">
    <location>
        <begin position="304"/>
        <end position="330"/>
    </location>
</feature>
<feature type="repeat" description="LRR 12">
    <location>
        <begin position="331"/>
        <end position="354"/>
    </location>
</feature>
<feature type="repeat" description="LRR 13">
    <location>
        <begin position="355"/>
        <end position="378"/>
    </location>
</feature>
<feature type="repeat" description="LRR 14">
    <location>
        <begin position="379"/>
        <end position="404"/>
    </location>
</feature>
<feature type="repeat" description="LRR 15">
    <location>
        <begin position="405"/>
        <end position="428"/>
    </location>
</feature>
<feature type="repeat" description="LRR 16">
    <location>
        <begin position="429"/>
        <end position="449"/>
    </location>
</feature>
<feature type="repeat" description="LRR 17">
    <location>
        <begin position="450"/>
        <end position="473"/>
    </location>
</feature>
<feature type="repeat" description="LRR 18">
    <location>
        <begin position="474"/>
        <end position="495"/>
    </location>
</feature>
<feature type="repeat" description="LRR 19">
    <location>
        <begin position="496"/>
        <end position="519"/>
    </location>
</feature>
<feature type="domain" description="LRRCT">
    <location>
        <begin position="520"/>
        <end position="575"/>
    </location>
</feature>
<feature type="domain" description="TIR" evidence="6">
    <location>
        <begin position="639"/>
        <end position="780"/>
    </location>
</feature>
<feature type="glycosylation site" description="N-linked (GlcNAc...) asparagine" evidence="5">
    <location>
        <position position="144"/>
    </location>
</feature>
<feature type="glycosylation site" description="N-linked (GlcNAc...) asparagine" evidence="5">
    <location>
        <position position="186"/>
    </location>
</feature>
<feature type="glycosylation site" description="N-linked (GlcNAc...) asparagine" evidence="5">
    <location>
        <position position="214"/>
    </location>
</feature>
<feature type="glycosylation site" description="N-linked (GlcNAc...) asparagine" evidence="5">
    <location>
        <position position="253"/>
    </location>
</feature>
<feature type="glycosylation site" description="N-linked (GlcNAc...) asparagine" evidence="5">
    <location>
        <position position="285"/>
    </location>
</feature>
<feature type="glycosylation site" description="N-linked (GlcNAc...) asparagine" evidence="5">
    <location>
        <position position="372"/>
    </location>
</feature>
<feature type="glycosylation site" description="N-linked (GlcNAc...) asparagine" evidence="5">
    <location>
        <position position="433"/>
    </location>
</feature>
<feature type="glycosylation site" description="N-linked (GlcNAc...) asparagine" evidence="5">
    <location>
        <position position="519"/>
    </location>
</feature>
<feature type="disulfide bond" evidence="1">
    <location>
        <begin position="117"/>
        <end position="139"/>
    </location>
</feature>
<feature type="disulfide bond" evidence="1">
    <location>
        <begin position="235"/>
        <end position="265"/>
    </location>
</feature>
<feature type="disulfide bond" evidence="1">
    <location>
        <begin position="348"/>
        <end position="373"/>
    </location>
</feature>
<feature type="disulfide bond" evidence="1">
    <location>
        <begin position="423"/>
        <end position="446"/>
    </location>
</feature>
<name>TLR6_DASNO</name>